<organism evidence="10">
    <name type="scientific">Penicillium citrinum</name>
    <dbReference type="NCBI Taxonomy" id="5077"/>
    <lineage>
        <taxon>Eukaryota</taxon>
        <taxon>Fungi</taxon>
        <taxon>Dikarya</taxon>
        <taxon>Ascomycota</taxon>
        <taxon>Pezizomycotina</taxon>
        <taxon>Eurotiomycetes</taxon>
        <taxon>Eurotiomycetidae</taxon>
        <taxon>Eurotiales</taxon>
        <taxon>Aspergillaceae</taxon>
        <taxon>Penicillium</taxon>
    </lineage>
</organism>
<comment type="function">
    <text evidence="2">Serine protease.</text>
</comment>
<comment type="allergen">
    <text evidence="6">Causes an allergic reaction in human. Binds to IgE.</text>
</comment>
<comment type="similarity">
    <text evidence="3 8">Belongs to the peptidase S8 family.</text>
</comment>
<accession>Q9Y755</accession>
<name>PENC2_PENCI</name>
<dbReference type="EC" id="3.4.21.-" evidence="2 10"/>
<dbReference type="EMBL" id="AF098517">
    <property type="protein sequence ID" value="AAD25995.1"/>
    <property type="molecule type" value="mRNA"/>
</dbReference>
<dbReference type="SMR" id="Q9Y755"/>
<dbReference type="Allergome" id="521">
    <property type="allergen name" value="Pen c 2"/>
</dbReference>
<dbReference type="GO" id="GO:0004252">
    <property type="term" value="F:serine-type endopeptidase activity"/>
    <property type="evidence" value="ECO:0000250"/>
    <property type="project" value="UniProtKB"/>
</dbReference>
<dbReference type="GO" id="GO:0006508">
    <property type="term" value="P:proteolysis"/>
    <property type="evidence" value="ECO:0000250"/>
    <property type="project" value="UniProtKB"/>
</dbReference>
<dbReference type="CDD" id="cd04077">
    <property type="entry name" value="Peptidases_S8_PCSK9_ProteinaseK_like"/>
    <property type="match status" value="1"/>
</dbReference>
<dbReference type="FunFam" id="3.30.70.80:FF:000006">
    <property type="entry name" value="Autophagic serine protease Alp2"/>
    <property type="match status" value="1"/>
</dbReference>
<dbReference type="FunFam" id="3.40.50.200:FF:000007">
    <property type="entry name" value="Subtilisin-like serine protease"/>
    <property type="match status" value="1"/>
</dbReference>
<dbReference type="Gene3D" id="3.30.70.80">
    <property type="entry name" value="Peptidase S8 propeptide/proteinase inhibitor I9"/>
    <property type="match status" value="1"/>
</dbReference>
<dbReference type="Gene3D" id="3.40.50.200">
    <property type="entry name" value="Peptidase S8/S53 domain"/>
    <property type="match status" value="1"/>
</dbReference>
<dbReference type="InterPro" id="IPR034193">
    <property type="entry name" value="PCSK9_ProteinaseK-like"/>
</dbReference>
<dbReference type="InterPro" id="IPR000209">
    <property type="entry name" value="Peptidase_S8/S53_dom"/>
</dbReference>
<dbReference type="InterPro" id="IPR036852">
    <property type="entry name" value="Peptidase_S8/S53_dom_sf"/>
</dbReference>
<dbReference type="InterPro" id="IPR022398">
    <property type="entry name" value="Peptidase_S8_His-AS"/>
</dbReference>
<dbReference type="InterPro" id="IPR023828">
    <property type="entry name" value="Peptidase_S8_Ser-AS"/>
</dbReference>
<dbReference type="InterPro" id="IPR050131">
    <property type="entry name" value="Peptidase_S8_subtilisin-like"/>
</dbReference>
<dbReference type="InterPro" id="IPR015500">
    <property type="entry name" value="Peptidase_S8_subtilisin-rel"/>
</dbReference>
<dbReference type="InterPro" id="IPR010259">
    <property type="entry name" value="S8pro/Inhibitor_I9"/>
</dbReference>
<dbReference type="InterPro" id="IPR037045">
    <property type="entry name" value="S8pro/Inhibitor_I9_sf"/>
</dbReference>
<dbReference type="PANTHER" id="PTHR43806:SF11">
    <property type="entry name" value="CEREVISIN-RELATED"/>
    <property type="match status" value="1"/>
</dbReference>
<dbReference type="PANTHER" id="PTHR43806">
    <property type="entry name" value="PEPTIDASE S8"/>
    <property type="match status" value="1"/>
</dbReference>
<dbReference type="Pfam" id="PF05922">
    <property type="entry name" value="Inhibitor_I9"/>
    <property type="match status" value="1"/>
</dbReference>
<dbReference type="Pfam" id="PF00082">
    <property type="entry name" value="Peptidase_S8"/>
    <property type="match status" value="1"/>
</dbReference>
<dbReference type="PRINTS" id="PR00723">
    <property type="entry name" value="SUBTILISIN"/>
</dbReference>
<dbReference type="SUPFAM" id="SSF54897">
    <property type="entry name" value="Protease propeptides/inhibitors"/>
    <property type="match status" value="1"/>
</dbReference>
<dbReference type="SUPFAM" id="SSF52743">
    <property type="entry name" value="Subtilisin-like"/>
    <property type="match status" value="1"/>
</dbReference>
<dbReference type="PROSITE" id="PS51892">
    <property type="entry name" value="SUBTILASE"/>
    <property type="match status" value="1"/>
</dbReference>
<dbReference type="PROSITE" id="PS00137">
    <property type="entry name" value="SUBTILASE_HIS"/>
    <property type="match status" value="1"/>
</dbReference>
<dbReference type="PROSITE" id="PS00138">
    <property type="entry name" value="SUBTILASE_SER"/>
    <property type="match status" value="1"/>
</dbReference>
<feature type="signal peptide" evidence="3">
    <location>
        <begin position="1"/>
        <end position="16"/>
    </location>
</feature>
<feature type="propeptide" id="PRO_0000446633" description="Removed in mature form" evidence="3 9">
    <location>
        <begin position="17"/>
        <end position="136"/>
    </location>
</feature>
<feature type="chain" id="PRO_5004338782" description="Subtilisin-like serine protease Pen c 2" evidence="9">
    <location>
        <begin position="137"/>
        <end position="457"/>
    </location>
</feature>
<feature type="domain" description="Inhibitor I9" evidence="3">
    <location>
        <begin position="43"/>
        <end position="134"/>
    </location>
</feature>
<feature type="domain" description="Peptidase S8" evidence="5">
    <location>
        <begin position="146"/>
        <end position="457"/>
    </location>
</feature>
<feature type="active site" description="Charge relay system" evidence="5">
    <location>
        <position position="182"/>
    </location>
</feature>
<feature type="active site" description="Charge relay system" evidence="5">
    <location>
        <position position="214"/>
    </location>
</feature>
<feature type="active site" description="Charge relay system" evidence="5">
    <location>
        <position position="380"/>
    </location>
</feature>
<feature type="site" description="Important for catalytic activity" evidence="1">
    <location>
        <position position="315"/>
    </location>
</feature>
<feature type="glycosylation site" description="N-linked (GlcNAc...) asparagine" evidence="4">
    <location>
        <position position="244"/>
    </location>
</feature>
<feature type="glycosylation site" description="N-linked (GlcNAc...) asparagine" evidence="4">
    <location>
        <position position="284"/>
    </location>
</feature>
<feature type="glycosylation site" description="N-linked (GlcNAc...) asparagine" evidence="4">
    <location>
        <position position="447"/>
    </location>
</feature>
<sequence>MKGFLGLALLPLLTAASPVSVESIHNGAAPIISSMNSQEIPDSYIVVFKKHVDTSAAAAHHSWVQDIHSAVNGRMELKKRGLFGFDTDAFLGVKHSFHVAGSLMGYAGHFHEDVIEQVRRHPDVDYIEKDSEVHHFDSPSVEKNAPWGLARISHRDSLSFGTFNKYLYAEDGGEGVDAYVIDTGTNTDHVDFEGRASWGKTIPQGDEDVDGNGHGTHCSGTIAGKKYGVAKKANVYAVKVLRSNGSGTMSDVVKGVEWAAEAHIKKSKAAKDGKAKGFKGSVANMSLGGGSSRTLDLAVNAAVDAGMHFAVAAGNDNADACNYSPAAAEKAVTVGASTLADERAYFSNYGKCTDIFAPGLNILSTWIGSKYAVNTISGTSMASPHIAGLLAYYVSLQPSDDSAFAVEKITPKKLKEALITVATSGALTDIPSDTPNLLAWNGGGSSNYTDIVAQGGY</sequence>
<evidence type="ECO:0000250" key="1">
    <source>
        <dbReference type="UniProtKB" id="Q5JIZ5"/>
    </source>
</evidence>
<evidence type="ECO:0000250" key="2">
    <source>
        <dbReference type="UniProtKB" id="Q9Y749"/>
    </source>
</evidence>
<evidence type="ECO:0000255" key="3"/>
<evidence type="ECO:0000255" key="4">
    <source>
        <dbReference type="PROSITE-ProRule" id="PRU00498"/>
    </source>
</evidence>
<evidence type="ECO:0000255" key="5">
    <source>
        <dbReference type="PROSITE-ProRule" id="PRU01240"/>
    </source>
</evidence>
<evidence type="ECO:0000269" key="6">
    <source>
    </source>
</evidence>
<evidence type="ECO:0000303" key="7">
    <source>
    </source>
</evidence>
<evidence type="ECO:0000305" key="8"/>
<evidence type="ECO:0000305" key="9">
    <source>
    </source>
</evidence>
<evidence type="ECO:0000312" key="10">
    <source>
        <dbReference type="EMBL" id="AAD25995.1"/>
    </source>
</evidence>
<protein>
    <recommendedName>
        <fullName evidence="8">Subtilisin-like serine protease Pen c 2</fullName>
        <ecNumber evidence="2 10">3.4.21.-</ecNumber>
    </recommendedName>
    <alternativeName>
        <fullName evidence="7">Vacuolar serine protease Pen c 2</fullName>
    </alternativeName>
    <allergenName evidence="7">Pen c 2</allergenName>
</protein>
<keyword id="KW-0020">Allergen</keyword>
<keyword id="KW-0903">Direct protein sequencing</keyword>
<keyword id="KW-0325">Glycoprotein</keyword>
<keyword id="KW-0378">Hydrolase</keyword>
<keyword id="KW-0645">Protease</keyword>
<keyword id="KW-0720">Serine protease</keyword>
<keyword id="KW-0732">Signal</keyword>
<keyword id="KW-0865">Zymogen</keyword>
<reference key="1">
    <citation type="journal article" date="1999" name="Biochem. J.">
        <title>Identification and expression of Pen c 2, a novel allergen from Penicillium citrinum.</title>
        <authorList>
            <person name="Chow L.P."/>
            <person name="Su N.Y."/>
            <person name="Yu C.J."/>
            <person name="Chiang B.L."/>
            <person name="Shen H.D."/>
        </authorList>
    </citation>
    <scope>NUCLEOTIDE SEQUENCE [MRNA]</scope>
    <scope>PROTEIN SEQUENCE OF 137-149</scope>
    <scope>ALLERGEN</scope>
    <source>
        <strain evidence="7">52-5</strain>
        <tissue evidence="7">Mycelium</tissue>
    </source>
</reference>
<proteinExistence type="evidence at protein level"/>